<evidence type="ECO:0000250" key="1">
    <source>
        <dbReference type="UniProtKB" id="Q9HAS3"/>
    </source>
</evidence>
<evidence type="ECO:0000255" key="2"/>
<evidence type="ECO:0000256" key="3">
    <source>
        <dbReference type="SAM" id="MobiDB-lite"/>
    </source>
</evidence>
<evidence type="ECO:0000269" key="4">
    <source>
    </source>
</evidence>
<evidence type="ECO:0000303" key="5">
    <source ref="1"/>
</evidence>
<evidence type="ECO:0000305" key="6"/>
<protein>
    <recommendedName>
        <fullName>Solute carrier family 28 member 3</fullName>
    </recommendedName>
    <alternativeName>
        <fullName evidence="5">Concentrative Na(+)-nucleoside cotransporter 3</fullName>
        <shortName evidence="5">CNT 3</shortName>
        <shortName evidence="5">rCNT3</shortName>
    </alternativeName>
</protein>
<feature type="chain" id="PRO_0000324148" description="Solute carrier family 28 member 3">
    <location>
        <begin position="1"/>
        <end position="705"/>
    </location>
</feature>
<feature type="topological domain" description="Cytoplasmic" evidence="6">
    <location>
        <begin position="1"/>
        <end position="119"/>
    </location>
</feature>
<feature type="transmembrane region" description="Helical; Name=TM1" evidence="1">
    <location>
        <begin position="120"/>
        <end position="140"/>
    </location>
</feature>
<feature type="topological domain" description="Extracellular" evidence="6">
    <location>
        <begin position="141"/>
        <end position="145"/>
    </location>
</feature>
<feature type="transmembrane region" description="Helical; Name=TM2" evidence="1">
    <location>
        <begin position="146"/>
        <end position="166"/>
    </location>
</feature>
<feature type="topological domain" description="Cytoplasmic" evidence="6">
    <location>
        <begin position="167"/>
        <end position="190"/>
    </location>
</feature>
<feature type="transmembrane region" description="Helical; Name=TM3" evidence="1">
    <location>
        <begin position="191"/>
        <end position="211"/>
    </location>
</feature>
<feature type="topological domain" description="Extracellular" evidence="6">
    <location>
        <begin position="212"/>
        <end position="214"/>
    </location>
</feature>
<feature type="transmembrane region" description="Helical; Name=TM4" evidence="1">
    <location>
        <begin position="215"/>
        <end position="236"/>
    </location>
</feature>
<feature type="topological domain" description="Cytoplasmic" evidence="6">
    <location>
        <begin position="237"/>
        <end position="244"/>
    </location>
</feature>
<feature type="transmembrane region" description="Helical; Name=TM5" evidence="1">
    <location>
        <begin position="245"/>
        <end position="264"/>
    </location>
</feature>
<feature type="topological domain" description="Extracellular" evidence="6">
    <location>
        <begin position="265"/>
        <end position="301"/>
    </location>
</feature>
<feature type="transmembrane region" description="Helical; Name=TM6" evidence="1">
    <location>
        <begin position="302"/>
        <end position="322"/>
    </location>
</feature>
<feature type="topological domain" description="Cytoplasmic" evidence="6">
    <location>
        <begin position="323"/>
        <end position="346"/>
    </location>
</feature>
<feature type="intramembrane region" description="Helical; Name=HP1" evidence="1">
    <location>
        <begin position="347"/>
        <end position="365"/>
    </location>
</feature>
<feature type="topological domain" description="Cytoplasmic" evidence="6">
    <location>
        <begin position="366"/>
        <end position="378"/>
    </location>
</feature>
<feature type="transmembrane region" description="Helical; Name=TM7" evidence="1">
    <location>
        <begin position="379"/>
        <end position="401"/>
    </location>
</feature>
<feature type="topological domain" description="Extracellular" evidence="6">
    <location>
        <begin position="402"/>
        <end position="403"/>
    </location>
</feature>
<feature type="transmembrane region" description="Helical; Name=TM8" evidence="1">
    <location>
        <begin position="404"/>
        <end position="425"/>
    </location>
</feature>
<feature type="topological domain" description="Cytoplasmic" evidence="6">
    <location>
        <begin position="426"/>
        <end position="460"/>
    </location>
</feature>
<feature type="transmembrane region" description="Helical; Name=TM9" evidence="1">
    <location>
        <begin position="461"/>
        <end position="486"/>
    </location>
</feature>
<feature type="topological domain" description="Extracellular" evidence="6">
    <location>
        <begin position="487"/>
        <end position="524"/>
    </location>
</feature>
<feature type="intramembrane region" description="Helical; Name=HP2" evidence="1">
    <location>
        <begin position="525"/>
        <end position="544"/>
    </location>
</feature>
<feature type="topological domain" description="Extracellular" evidence="6">
    <location>
        <begin position="545"/>
        <end position="583"/>
    </location>
</feature>
<feature type="transmembrane region" description="Helical; Name=TM10" evidence="1">
    <location>
        <begin position="584"/>
        <end position="594"/>
    </location>
</feature>
<feature type="topological domain" description="Cytoplasmic" evidence="6">
    <location>
        <begin position="595"/>
        <end position="607"/>
    </location>
</feature>
<feature type="transmembrane region" description="Helical; Name=TM11" evidence="1">
    <location>
        <begin position="608"/>
        <end position="630"/>
    </location>
</feature>
<feature type="topological domain" description="Extracellular" evidence="6">
    <location>
        <begin position="631"/>
        <end position="705"/>
    </location>
</feature>
<feature type="region of interest" description="Disordered" evidence="3">
    <location>
        <begin position="1"/>
        <end position="96"/>
    </location>
</feature>
<feature type="compositionally biased region" description="Basic and acidic residues" evidence="3">
    <location>
        <begin position="1"/>
        <end position="21"/>
    </location>
</feature>
<feature type="compositionally biased region" description="Polar residues" evidence="3">
    <location>
        <begin position="48"/>
        <end position="63"/>
    </location>
</feature>
<feature type="compositionally biased region" description="Basic and acidic residues" evidence="3">
    <location>
        <begin position="65"/>
        <end position="74"/>
    </location>
</feature>
<reference key="1">
    <citation type="submission" date="2001-10" db="EMBL/GenBank/DDBJ databases">
        <title>A rat concentrative Na+-nucleoside cotransporter protein (Cnt3) broadly selective for purine and pyrimidine nucleosides (system cib).</title>
        <authorList>
            <person name="Yao S.Y.M."/>
            <person name="Ng A.M.L."/>
            <person name="Loewen S.K."/>
            <person name="Cass C.E."/>
            <person name="Baldwin S.A."/>
            <person name="Young J.D."/>
        </authorList>
    </citation>
    <scope>NUCLEOTIDE SEQUENCE [MRNA]</scope>
    <source>
        <strain>Sprague-Dawley</strain>
        <tissue>Pancreas</tissue>
    </source>
</reference>
<reference key="2">
    <citation type="journal article" date="2005" name="Kidney Int.">
        <title>Expression of concentrative nucleoside transporters SLC28 (CNT1, CNT2, and CNT3) along the rat nephron: effect of diabetes.</title>
        <authorList>
            <person name="Rodriguez-Mulero S."/>
            <person name="Errasti-Murugarren E."/>
            <person name="Ballarin J."/>
            <person name="Felipe A."/>
            <person name="Doucet A."/>
            <person name="Casado F.J."/>
            <person name="Pastor-Anglada M."/>
        </authorList>
    </citation>
    <scope>TISSUE SPECIFICITY</scope>
</reference>
<comment type="function">
    <text evidence="1">Sodium-dependent, pyrimidine- and purine-selective. Involved in the homeostasis of endogenous nucleosides. Exhibits the transport characteristics of the nucleoside transport system cib or N3 subtype (N3/cib) (with marked transport of both thymidine and inosine). Employs a 2:1 sodium/nucleoside ratio. Also able to transport gemcitabine, 3'-azido-3'-deoxythymidine (AZT), ribavirin and 3-deazauridine.</text>
</comment>
<comment type="catalytic activity">
    <reaction evidence="1">
        <text>thymidine(out) + 2 Na(+)(out) = thymidine(in) + 2 Na(+)(in)</text>
        <dbReference type="Rhea" id="RHEA:69899"/>
        <dbReference type="ChEBI" id="CHEBI:17748"/>
        <dbReference type="ChEBI" id="CHEBI:29101"/>
    </reaction>
</comment>
<comment type="catalytic activity">
    <reaction evidence="1">
        <text>cytidine(out) + 2 Na(+)(out) = cytidine(in) + 2 Na(+)(in)</text>
        <dbReference type="Rhea" id="RHEA:69903"/>
        <dbReference type="ChEBI" id="CHEBI:17562"/>
        <dbReference type="ChEBI" id="CHEBI:29101"/>
    </reaction>
</comment>
<comment type="catalytic activity">
    <reaction evidence="1">
        <text>uridine(out) + 2 Na(+)(out) = uridine(in) + 2 Na(+)(in)</text>
        <dbReference type="Rhea" id="RHEA:69907"/>
        <dbReference type="ChEBI" id="CHEBI:16704"/>
        <dbReference type="ChEBI" id="CHEBI:29101"/>
    </reaction>
</comment>
<comment type="catalytic activity">
    <reaction evidence="1">
        <text>adenosine(out) + 2 Na(+)(out) = adenosine(in) + 2 Na(+)(in)</text>
        <dbReference type="Rhea" id="RHEA:69911"/>
        <dbReference type="ChEBI" id="CHEBI:16335"/>
        <dbReference type="ChEBI" id="CHEBI:29101"/>
    </reaction>
</comment>
<comment type="catalytic activity">
    <reaction evidence="1">
        <text>guanosine(out) + 2 Na(+)(out) = guanosine(in) + 2 Na(+)(in)</text>
        <dbReference type="Rhea" id="RHEA:69915"/>
        <dbReference type="ChEBI" id="CHEBI:16750"/>
        <dbReference type="ChEBI" id="CHEBI:29101"/>
    </reaction>
</comment>
<comment type="catalytic activity">
    <reaction evidence="1">
        <text>inosine(out) + 2 Na(+)(out) = inosine(in) + 2 Na(+)(in)</text>
        <dbReference type="Rhea" id="RHEA:69919"/>
        <dbReference type="ChEBI" id="CHEBI:17596"/>
        <dbReference type="ChEBI" id="CHEBI:29101"/>
    </reaction>
</comment>
<comment type="subunit">
    <text evidence="1">Homotrimer.</text>
</comment>
<comment type="subcellular location">
    <subcellularLocation>
        <location evidence="1">Cell membrane</location>
        <topology evidence="2">Multi-pass membrane protein</topology>
    </subcellularLocation>
</comment>
<comment type="tissue specificity">
    <text evidence="4">Expressed in kidney; in the proximal tubule, glomerulus and cortical collecting duct.</text>
</comment>
<comment type="similarity">
    <text evidence="6">Belongs to the concentrative nucleoside transporter (CNT) (TC 2.A.41) family.</text>
</comment>
<keyword id="KW-1003">Cell membrane</keyword>
<keyword id="KW-0472">Membrane</keyword>
<keyword id="KW-1185">Reference proteome</keyword>
<keyword id="KW-0769">Symport</keyword>
<keyword id="KW-0812">Transmembrane</keyword>
<keyword id="KW-1133">Transmembrane helix</keyword>
<keyword id="KW-0813">Transport</keyword>
<name>S28A3_RAT</name>
<gene>
    <name type="primary">Slc28a3</name>
    <name evidence="5" type="synonym">Cnt3</name>
</gene>
<proteinExistence type="evidence at transcript level"/>
<accession>Q8VIH3</accession>
<sequence>MSRSDPDPGKNSEPSKSKMSLELRPTAPSDQGRLNEAFQDEDLEEQNAPGNSTVRSRVVQSGEQGRAKQDDRQITIEQEPLGPKEGTEEESEDERQKGFLERKYDTVCEFCRKHRVILQHTIWAVLLTGFLALVIAACALNFHRALPLFVITLVTIFFVVWDRLMAKYEQRIDDVLSPGKRLLERHWFWLKWVVWCSLILAVILWLALDTARLGQQQLISFGGLVMYIVLLFLFSKHPTRVYWRPVFWGIGLQFLLGLLILRTRPGFVAFDWMGKQVQTFLGYTDAGAQFVFGEKYTDHFFAFKILPIVVFFSTVMSMLYYLGLMQWIIRKVGWLMLVTMGSSPIESVVAAGNIFVGQTESPLLVQPYLPHVTKSELHTIMTAGFATIAGSVLGAYISFGVSSTHLLTASVMSAPAALAVAKLFWPETEKPKITLKNAMKMENGDSRNLLEAATQGASSSIPLVANIAANLIAFLALLSFVNSALSWFGSMFDYPQLSFELICSYIFMPFSFMMGVDWQDRFMVAKLIGYKTFFNEFVAYEHLSKFINLRKAAGPKFVNGVQQYMSIRSETIATYALCGFANFGSLGIVIGGLTSIAPSRKRDIASGAMRALIAGTIACFMTACIAGMLSDTPVAINCHHVLESSKVLSNTTEVASCCQGLFNSTVARGPNDVLPGGNFSLYTLKSCCNLLKPPTLNCGWIPNIP</sequence>
<organism>
    <name type="scientific">Rattus norvegicus</name>
    <name type="common">Rat</name>
    <dbReference type="NCBI Taxonomy" id="10116"/>
    <lineage>
        <taxon>Eukaryota</taxon>
        <taxon>Metazoa</taxon>
        <taxon>Chordata</taxon>
        <taxon>Craniata</taxon>
        <taxon>Vertebrata</taxon>
        <taxon>Euteleostomi</taxon>
        <taxon>Mammalia</taxon>
        <taxon>Eutheria</taxon>
        <taxon>Euarchontoglires</taxon>
        <taxon>Glires</taxon>
        <taxon>Rodentia</taxon>
        <taxon>Myomorpha</taxon>
        <taxon>Muroidea</taxon>
        <taxon>Muridae</taxon>
        <taxon>Murinae</taxon>
        <taxon>Rattus</taxon>
    </lineage>
</organism>
<dbReference type="EMBL" id="AY059414">
    <property type="protein sequence ID" value="AAL27091.1"/>
    <property type="molecule type" value="mRNA"/>
</dbReference>
<dbReference type="RefSeq" id="NP_543184.1">
    <property type="nucleotide sequence ID" value="NM_080908.1"/>
</dbReference>
<dbReference type="SMR" id="Q8VIH3"/>
<dbReference type="STRING" id="10116.ENSRNOP00000025745"/>
<dbReference type="PhosphoSitePlus" id="Q8VIH3"/>
<dbReference type="PaxDb" id="10116-ENSRNOP00000025745"/>
<dbReference type="GeneID" id="140944"/>
<dbReference type="KEGG" id="rno:140944"/>
<dbReference type="UCSC" id="RGD:621224">
    <property type="organism name" value="rat"/>
</dbReference>
<dbReference type="AGR" id="RGD:621224"/>
<dbReference type="CTD" id="64078"/>
<dbReference type="RGD" id="621224">
    <property type="gene designation" value="Slc28a3"/>
</dbReference>
<dbReference type="eggNOG" id="KOG3747">
    <property type="taxonomic scope" value="Eukaryota"/>
</dbReference>
<dbReference type="InParanoid" id="Q8VIH3"/>
<dbReference type="PhylomeDB" id="Q8VIH3"/>
<dbReference type="Reactome" id="R-RNO-83936">
    <property type="pathway name" value="Transport of nucleosides and free purine and pyrimidine bases across the plasma membrane"/>
</dbReference>
<dbReference type="Reactome" id="R-RNO-9748787">
    <property type="pathway name" value="Azathioprine ADME"/>
</dbReference>
<dbReference type="Reactome" id="R-RNO-9755088">
    <property type="pathway name" value="Ribavirin ADME"/>
</dbReference>
<dbReference type="PRO" id="PR:Q8VIH3"/>
<dbReference type="Proteomes" id="UP000002494">
    <property type="component" value="Unplaced"/>
</dbReference>
<dbReference type="GO" id="GO:0031526">
    <property type="term" value="C:brush border membrane"/>
    <property type="evidence" value="ECO:0000266"/>
    <property type="project" value="RGD"/>
</dbReference>
<dbReference type="GO" id="GO:0005886">
    <property type="term" value="C:plasma membrane"/>
    <property type="evidence" value="ECO:0000318"/>
    <property type="project" value="GO_Central"/>
</dbReference>
<dbReference type="GO" id="GO:0015390">
    <property type="term" value="F:purine-specific nucleoside:sodium symporter activity"/>
    <property type="evidence" value="ECO:0000266"/>
    <property type="project" value="RGD"/>
</dbReference>
<dbReference type="GO" id="GO:0015389">
    <property type="term" value="F:pyrimidine- and adenosine-specific:sodium symporter activity"/>
    <property type="evidence" value="ECO:0000266"/>
    <property type="project" value="RGD"/>
</dbReference>
<dbReference type="GO" id="GO:0015213">
    <property type="term" value="F:uridine transmembrane transporter activity"/>
    <property type="evidence" value="ECO:0000266"/>
    <property type="project" value="RGD"/>
</dbReference>
<dbReference type="GO" id="GO:1901642">
    <property type="term" value="P:nucleoside transmembrane transport"/>
    <property type="evidence" value="ECO:0000266"/>
    <property type="project" value="RGD"/>
</dbReference>
<dbReference type="GO" id="GO:0015860">
    <property type="term" value="P:purine nucleoside transmembrane transport"/>
    <property type="evidence" value="ECO:0000266"/>
    <property type="project" value="RGD"/>
</dbReference>
<dbReference type="GO" id="GO:0015864">
    <property type="term" value="P:pyrimidine nucleoside transport"/>
    <property type="evidence" value="ECO:0000266"/>
    <property type="project" value="RGD"/>
</dbReference>
<dbReference type="GO" id="GO:0072531">
    <property type="term" value="P:pyrimidine-containing compound transmembrane transport"/>
    <property type="evidence" value="ECO:0000266"/>
    <property type="project" value="RGD"/>
</dbReference>
<dbReference type="GO" id="GO:0001895">
    <property type="term" value="P:retina homeostasis"/>
    <property type="evidence" value="ECO:0000314"/>
    <property type="project" value="RGD"/>
</dbReference>
<dbReference type="GO" id="GO:0015862">
    <property type="term" value="P:uridine transmembrane transport"/>
    <property type="evidence" value="ECO:0000266"/>
    <property type="project" value="RGD"/>
</dbReference>
<dbReference type="InterPro" id="IPR008276">
    <property type="entry name" value="C_nuclsd_transpt"/>
</dbReference>
<dbReference type="InterPro" id="IPR018270">
    <property type="entry name" value="C_nuclsd_transpt_met_bac"/>
</dbReference>
<dbReference type="InterPro" id="IPR011657">
    <property type="entry name" value="CNT_C_dom"/>
</dbReference>
<dbReference type="InterPro" id="IPR002668">
    <property type="entry name" value="CNT_N_dom"/>
</dbReference>
<dbReference type="InterPro" id="IPR011642">
    <property type="entry name" value="Gate_dom"/>
</dbReference>
<dbReference type="NCBIfam" id="TIGR00804">
    <property type="entry name" value="nupC"/>
    <property type="match status" value="1"/>
</dbReference>
<dbReference type="PANTHER" id="PTHR10590">
    <property type="entry name" value="SODIUM/NUCLEOSIDE COTRANSPORTER"/>
    <property type="match status" value="1"/>
</dbReference>
<dbReference type="PANTHER" id="PTHR10590:SF4">
    <property type="entry name" value="SOLUTE CARRIER FAMILY 28 MEMBER 3"/>
    <property type="match status" value="1"/>
</dbReference>
<dbReference type="Pfam" id="PF07670">
    <property type="entry name" value="Gate"/>
    <property type="match status" value="1"/>
</dbReference>
<dbReference type="Pfam" id="PF07662">
    <property type="entry name" value="Nucleos_tra2_C"/>
    <property type="match status" value="1"/>
</dbReference>
<dbReference type="Pfam" id="PF01773">
    <property type="entry name" value="Nucleos_tra2_N"/>
    <property type="match status" value="1"/>
</dbReference>